<name>SELO_AZOVD</name>
<accession>C1DHP3</accession>
<reference key="1">
    <citation type="journal article" date="2009" name="J. Bacteriol.">
        <title>Genome sequence of Azotobacter vinelandii, an obligate aerobe specialized to support diverse anaerobic metabolic processes.</title>
        <authorList>
            <person name="Setubal J.C."/>
            <person name="Dos Santos P."/>
            <person name="Goldman B.S."/>
            <person name="Ertesvaag H."/>
            <person name="Espin G."/>
            <person name="Rubio L.M."/>
            <person name="Valla S."/>
            <person name="Almeida N.F."/>
            <person name="Balasubramanian D."/>
            <person name="Cromes L."/>
            <person name="Curatti L."/>
            <person name="Du Z."/>
            <person name="Godsy E."/>
            <person name="Goodner B."/>
            <person name="Hellner-Burris K."/>
            <person name="Hernandez J.A."/>
            <person name="Houmiel K."/>
            <person name="Imperial J."/>
            <person name="Kennedy C."/>
            <person name="Larson T.J."/>
            <person name="Latreille P."/>
            <person name="Ligon L.S."/>
            <person name="Lu J."/>
            <person name="Maerk M."/>
            <person name="Miller N.M."/>
            <person name="Norton S."/>
            <person name="O'Carroll I.P."/>
            <person name="Paulsen I."/>
            <person name="Raulfs E.C."/>
            <person name="Roemer R."/>
            <person name="Rosser J."/>
            <person name="Segura D."/>
            <person name="Slater S."/>
            <person name="Stricklin S.L."/>
            <person name="Studholme D.J."/>
            <person name="Sun J."/>
            <person name="Viana C.J."/>
            <person name="Wallin E."/>
            <person name="Wang B."/>
            <person name="Wheeler C."/>
            <person name="Zhu H."/>
            <person name="Dean D.R."/>
            <person name="Dixon R."/>
            <person name="Wood D."/>
        </authorList>
    </citation>
    <scope>NUCLEOTIDE SEQUENCE [LARGE SCALE GENOMIC DNA]</scope>
    <source>
        <strain>DJ / ATCC BAA-1303</strain>
    </source>
</reference>
<proteinExistence type="inferred from homology"/>
<organism>
    <name type="scientific">Azotobacter vinelandii (strain DJ / ATCC BAA-1303)</name>
    <dbReference type="NCBI Taxonomy" id="322710"/>
    <lineage>
        <taxon>Bacteria</taxon>
        <taxon>Pseudomonadati</taxon>
        <taxon>Pseudomonadota</taxon>
        <taxon>Gammaproteobacteria</taxon>
        <taxon>Pseudomonadales</taxon>
        <taxon>Pseudomonadaceae</taxon>
        <taxon>Azotobacter</taxon>
    </lineage>
</organism>
<keyword id="KW-0067">ATP-binding</keyword>
<keyword id="KW-0460">Magnesium</keyword>
<keyword id="KW-0464">Manganese</keyword>
<keyword id="KW-0479">Metal-binding</keyword>
<keyword id="KW-0547">Nucleotide-binding</keyword>
<keyword id="KW-0548">Nucleotidyltransferase</keyword>
<keyword id="KW-0808">Transferase</keyword>
<gene>
    <name evidence="1" type="primary">ydiU</name>
    <name evidence="1" type="synonym">selO</name>
    <name type="ordered locus">Avin_45110</name>
</gene>
<evidence type="ECO:0000255" key="1">
    <source>
        <dbReference type="HAMAP-Rule" id="MF_00692"/>
    </source>
</evidence>
<sequence length="487" mass="54851">MKRLSELAFDNRFARLGDTFSTAVTPLPIASPRLVVASPAALALLDLEPAVADDPQLVEYCAGQCPWPGAEPRAMAYSGHQFGFYNPQLGDGRGLLLGEVINAAGERWDLHLKGAGKTPYSRMGDGRAVLRSSIREFLASEHLHALGIPTSRALCVTASDTPVWRETEERAATLLRLAPSHVRFGHFEFFYYSRQHEALRQLLDYVIGEYFADCLAQPDPYRAFFDRVLERTAALLARWQAYGFCHGVMNTDNMSILGITFDFGPYAFLDDFDPGFVCNHSDDTGRYSFDNQVPIAHWNLSALGQALTPFVDKDALLGSLKRFLPLFRGAWLELMRRRLGFTTAEADDRERIQRLLQLMQGSAVDYSRFFRELGDRPAAAALRRLREDFVDLAGFDAWAGDHLARLARENEADEAARRARMHAVNPKYILRNYLAQQAIEAAERGDYSPVRELHAVLSRPFDEQPGMERYAERPPEWGKHLEISCSS</sequence>
<dbReference type="EC" id="2.7.7.-" evidence="1"/>
<dbReference type="EC" id="2.7.7.108" evidence="1"/>
<dbReference type="EMBL" id="CP001157">
    <property type="protein sequence ID" value="ACO80626.1"/>
    <property type="molecule type" value="Genomic_DNA"/>
</dbReference>
<dbReference type="RefSeq" id="WP_012702993.1">
    <property type="nucleotide sequence ID" value="NC_012560.1"/>
</dbReference>
<dbReference type="SMR" id="C1DHP3"/>
<dbReference type="STRING" id="322710.Avin_45110"/>
<dbReference type="EnsemblBacteria" id="ACO80626">
    <property type="protein sequence ID" value="ACO80626"/>
    <property type="gene ID" value="Avin_45110"/>
</dbReference>
<dbReference type="GeneID" id="88187396"/>
<dbReference type="KEGG" id="avn:Avin_45110"/>
<dbReference type="eggNOG" id="COG0397">
    <property type="taxonomic scope" value="Bacteria"/>
</dbReference>
<dbReference type="HOGENOM" id="CLU_010245_4_0_6"/>
<dbReference type="OrthoDB" id="9776281at2"/>
<dbReference type="Proteomes" id="UP000002424">
    <property type="component" value="Chromosome"/>
</dbReference>
<dbReference type="GO" id="GO:0070733">
    <property type="term" value="F:AMPylase activity"/>
    <property type="evidence" value="ECO:0007669"/>
    <property type="project" value="TreeGrafter"/>
</dbReference>
<dbReference type="GO" id="GO:0005524">
    <property type="term" value="F:ATP binding"/>
    <property type="evidence" value="ECO:0007669"/>
    <property type="project" value="UniProtKB-UniRule"/>
</dbReference>
<dbReference type="GO" id="GO:0000287">
    <property type="term" value="F:magnesium ion binding"/>
    <property type="evidence" value="ECO:0007669"/>
    <property type="project" value="UniProtKB-UniRule"/>
</dbReference>
<dbReference type="HAMAP" id="MF_00692">
    <property type="entry name" value="YdiU_SelO"/>
    <property type="match status" value="1"/>
</dbReference>
<dbReference type="InterPro" id="IPR003846">
    <property type="entry name" value="SelO"/>
</dbReference>
<dbReference type="NCBIfam" id="NF000658">
    <property type="entry name" value="PRK00029.1"/>
    <property type="match status" value="1"/>
</dbReference>
<dbReference type="NCBIfam" id="NF045949">
    <property type="entry name" value="PrtAdtaseSelOPseudom"/>
    <property type="match status" value="1"/>
</dbReference>
<dbReference type="PANTHER" id="PTHR32057">
    <property type="entry name" value="PROTEIN ADENYLYLTRANSFERASE SELO, MITOCHONDRIAL"/>
    <property type="match status" value="1"/>
</dbReference>
<dbReference type="PANTHER" id="PTHR32057:SF14">
    <property type="entry name" value="PROTEIN ADENYLYLTRANSFERASE SELO, MITOCHONDRIAL"/>
    <property type="match status" value="1"/>
</dbReference>
<dbReference type="Pfam" id="PF02696">
    <property type="entry name" value="SelO"/>
    <property type="match status" value="1"/>
</dbReference>
<feature type="chain" id="PRO_1000212587" description="Protein nucleotidyltransferase YdiU">
    <location>
        <begin position="1"/>
        <end position="487"/>
    </location>
</feature>
<feature type="active site" description="Proton acceptor" evidence="1">
    <location>
        <position position="252"/>
    </location>
</feature>
<feature type="binding site" evidence="1">
    <location>
        <position position="90"/>
    </location>
    <ligand>
        <name>ATP</name>
        <dbReference type="ChEBI" id="CHEBI:30616"/>
    </ligand>
</feature>
<feature type="binding site" evidence="1">
    <location>
        <position position="92"/>
    </location>
    <ligand>
        <name>ATP</name>
        <dbReference type="ChEBI" id="CHEBI:30616"/>
    </ligand>
</feature>
<feature type="binding site" evidence="1">
    <location>
        <position position="93"/>
    </location>
    <ligand>
        <name>ATP</name>
        <dbReference type="ChEBI" id="CHEBI:30616"/>
    </ligand>
</feature>
<feature type="binding site" evidence="1">
    <location>
        <position position="113"/>
    </location>
    <ligand>
        <name>ATP</name>
        <dbReference type="ChEBI" id="CHEBI:30616"/>
    </ligand>
</feature>
<feature type="binding site" evidence="1">
    <location>
        <position position="125"/>
    </location>
    <ligand>
        <name>ATP</name>
        <dbReference type="ChEBI" id="CHEBI:30616"/>
    </ligand>
</feature>
<feature type="binding site" evidence="1">
    <location>
        <position position="126"/>
    </location>
    <ligand>
        <name>ATP</name>
        <dbReference type="ChEBI" id="CHEBI:30616"/>
    </ligand>
</feature>
<feature type="binding site" evidence="1">
    <location>
        <position position="176"/>
    </location>
    <ligand>
        <name>ATP</name>
        <dbReference type="ChEBI" id="CHEBI:30616"/>
    </ligand>
</feature>
<feature type="binding site" evidence="1">
    <location>
        <position position="183"/>
    </location>
    <ligand>
        <name>ATP</name>
        <dbReference type="ChEBI" id="CHEBI:30616"/>
    </ligand>
</feature>
<feature type="binding site" evidence="1">
    <location>
        <position position="253"/>
    </location>
    <ligand>
        <name>Mg(2+)</name>
        <dbReference type="ChEBI" id="CHEBI:18420"/>
    </ligand>
</feature>
<feature type="binding site" evidence="1">
    <location>
        <position position="262"/>
    </location>
    <ligand>
        <name>ATP</name>
        <dbReference type="ChEBI" id="CHEBI:30616"/>
    </ligand>
</feature>
<feature type="binding site" evidence="1">
    <location>
        <position position="262"/>
    </location>
    <ligand>
        <name>Mg(2+)</name>
        <dbReference type="ChEBI" id="CHEBI:18420"/>
    </ligand>
</feature>
<protein>
    <recommendedName>
        <fullName evidence="1">Protein nucleotidyltransferase YdiU</fullName>
        <ecNumber evidence="1">2.7.7.-</ecNumber>
    </recommendedName>
    <alternativeName>
        <fullName evidence="1">Protein adenylyltransferase YdiU</fullName>
        <ecNumber evidence="1">2.7.7.108</ecNumber>
    </alternativeName>
    <alternativeName>
        <fullName evidence="1">Protein uridylyltransferase YdiU</fullName>
        <ecNumber evidence="1">2.7.7.-</ecNumber>
    </alternativeName>
</protein>
<comment type="function">
    <text evidence="1">Nucleotidyltransferase involved in the post-translational modification of proteins. It can catalyze the addition of adenosine monophosphate (AMP) or uridine monophosphate (UMP) to a protein, resulting in modifications known as AMPylation and UMPylation.</text>
</comment>
<comment type="catalytic activity">
    <reaction evidence="1">
        <text>L-seryl-[protein] + ATP = 3-O-(5'-adenylyl)-L-seryl-[protein] + diphosphate</text>
        <dbReference type="Rhea" id="RHEA:58120"/>
        <dbReference type="Rhea" id="RHEA-COMP:9863"/>
        <dbReference type="Rhea" id="RHEA-COMP:15073"/>
        <dbReference type="ChEBI" id="CHEBI:29999"/>
        <dbReference type="ChEBI" id="CHEBI:30616"/>
        <dbReference type="ChEBI" id="CHEBI:33019"/>
        <dbReference type="ChEBI" id="CHEBI:142516"/>
        <dbReference type="EC" id="2.7.7.108"/>
    </reaction>
</comment>
<comment type="catalytic activity">
    <reaction evidence="1">
        <text>L-threonyl-[protein] + ATP = 3-O-(5'-adenylyl)-L-threonyl-[protein] + diphosphate</text>
        <dbReference type="Rhea" id="RHEA:54292"/>
        <dbReference type="Rhea" id="RHEA-COMP:11060"/>
        <dbReference type="Rhea" id="RHEA-COMP:13847"/>
        <dbReference type="ChEBI" id="CHEBI:30013"/>
        <dbReference type="ChEBI" id="CHEBI:30616"/>
        <dbReference type="ChEBI" id="CHEBI:33019"/>
        <dbReference type="ChEBI" id="CHEBI:138113"/>
        <dbReference type="EC" id="2.7.7.108"/>
    </reaction>
</comment>
<comment type="catalytic activity">
    <reaction evidence="1">
        <text>L-tyrosyl-[protein] + ATP = O-(5'-adenylyl)-L-tyrosyl-[protein] + diphosphate</text>
        <dbReference type="Rhea" id="RHEA:54288"/>
        <dbReference type="Rhea" id="RHEA-COMP:10136"/>
        <dbReference type="Rhea" id="RHEA-COMP:13846"/>
        <dbReference type="ChEBI" id="CHEBI:30616"/>
        <dbReference type="ChEBI" id="CHEBI:33019"/>
        <dbReference type="ChEBI" id="CHEBI:46858"/>
        <dbReference type="ChEBI" id="CHEBI:83624"/>
        <dbReference type="EC" id="2.7.7.108"/>
    </reaction>
</comment>
<comment type="catalytic activity">
    <reaction evidence="1">
        <text>L-histidyl-[protein] + UTP = N(tele)-(5'-uridylyl)-L-histidyl-[protein] + diphosphate</text>
        <dbReference type="Rhea" id="RHEA:83891"/>
        <dbReference type="Rhea" id="RHEA-COMP:9745"/>
        <dbReference type="Rhea" id="RHEA-COMP:20239"/>
        <dbReference type="ChEBI" id="CHEBI:29979"/>
        <dbReference type="ChEBI" id="CHEBI:33019"/>
        <dbReference type="ChEBI" id="CHEBI:46398"/>
        <dbReference type="ChEBI" id="CHEBI:233474"/>
    </reaction>
</comment>
<comment type="catalytic activity">
    <reaction evidence="1">
        <text>L-seryl-[protein] + UTP = O-(5'-uridylyl)-L-seryl-[protein] + diphosphate</text>
        <dbReference type="Rhea" id="RHEA:64604"/>
        <dbReference type="Rhea" id="RHEA-COMP:9863"/>
        <dbReference type="Rhea" id="RHEA-COMP:16635"/>
        <dbReference type="ChEBI" id="CHEBI:29999"/>
        <dbReference type="ChEBI" id="CHEBI:33019"/>
        <dbReference type="ChEBI" id="CHEBI:46398"/>
        <dbReference type="ChEBI" id="CHEBI:156051"/>
    </reaction>
</comment>
<comment type="catalytic activity">
    <reaction evidence="1">
        <text>L-tyrosyl-[protein] + UTP = O-(5'-uridylyl)-L-tyrosyl-[protein] + diphosphate</text>
        <dbReference type="Rhea" id="RHEA:83887"/>
        <dbReference type="Rhea" id="RHEA-COMP:10136"/>
        <dbReference type="Rhea" id="RHEA-COMP:20238"/>
        <dbReference type="ChEBI" id="CHEBI:33019"/>
        <dbReference type="ChEBI" id="CHEBI:46398"/>
        <dbReference type="ChEBI" id="CHEBI:46858"/>
        <dbReference type="ChEBI" id="CHEBI:90602"/>
    </reaction>
</comment>
<comment type="cofactor">
    <cofactor evidence="1">
        <name>Mg(2+)</name>
        <dbReference type="ChEBI" id="CHEBI:18420"/>
    </cofactor>
    <cofactor evidence="1">
        <name>Mn(2+)</name>
        <dbReference type="ChEBI" id="CHEBI:29035"/>
    </cofactor>
</comment>
<comment type="similarity">
    <text evidence="1">Belongs to the SELO family.</text>
</comment>